<evidence type="ECO:0000255" key="1">
    <source>
        <dbReference type="HAMAP-Rule" id="MF_01527"/>
    </source>
</evidence>
<evidence type="ECO:0000305" key="2"/>
<proteinExistence type="inferred from homology"/>
<geneLocation type="plasmid">
    <name>pLVPK</name>
</geneLocation>
<reference key="1">
    <citation type="journal article" date="2004" name="Gene">
        <title>Sequencing and analysis of the large virulence plasmid pLVPK of Klebsiella pneumoniae CG43.</title>
        <authorList>
            <person name="Chen Y.-T."/>
            <person name="Chang H.-Y."/>
            <person name="Lai Y.-C."/>
            <person name="Pan C.-C."/>
            <person name="Tsai S.-F."/>
            <person name="Peng H.-L."/>
        </authorList>
    </citation>
    <scope>NUCLEOTIDE SEQUENCE [GENOMIC DNA]</scope>
    <source>
        <strain>CG43</strain>
    </source>
</reference>
<keyword id="KW-0378">Hydrolase</keyword>
<keyword id="KW-0614">Plasmid</keyword>
<organism>
    <name type="scientific">Klebsiella pneumoniae</name>
    <dbReference type="NCBI Taxonomy" id="573"/>
    <lineage>
        <taxon>Bacteria</taxon>
        <taxon>Pseudomonadati</taxon>
        <taxon>Pseudomonadota</taxon>
        <taxon>Gammaproteobacteria</taxon>
        <taxon>Enterobacterales</taxon>
        <taxon>Enterobacteriaceae</taxon>
        <taxon>Klebsiella/Raoultella group</taxon>
        <taxon>Klebsiella</taxon>
        <taxon>Klebsiella pneumoniae complex</taxon>
    </lineage>
</organism>
<name>GCH4_KLEPN</name>
<comment type="function">
    <text evidence="1">Converts GTP to 7,8-dihydroneopterin triphosphate.</text>
</comment>
<comment type="catalytic activity">
    <reaction evidence="1">
        <text>GTP + H2O = 7,8-dihydroneopterin 3'-triphosphate + formate + H(+)</text>
        <dbReference type="Rhea" id="RHEA:17473"/>
        <dbReference type="ChEBI" id="CHEBI:15377"/>
        <dbReference type="ChEBI" id="CHEBI:15378"/>
        <dbReference type="ChEBI" id="CHEBI:15740"/>
        <dbReference type="ChEBI" id="CHEBI:37565"/>
        <dbReference type="ChEBI" id="CHEBI:58462"/>
        <dbReference type="EC" id="3.5.4.16"/>
    </reaction>
</comment>
<comment type="pathway">
    <text evidence="1">Cofactor biosynthesis; 7,8-dihydroneopterin triphosphate biosynthesis; 7,8-dihydroneopterin triphosphate from GTP: step 1/1.</text>
</comment>
<comment type="similarity">
    <text evidence="1">Belongs to the GTP cyclohydrolase IV family.</text>
</comment>
<comment type="sequence caution" evidence="2">
    <conflict type="erroneous initiation">
        <sequence resource="EMBL-CDS" id="AAR07797"/>
    </conflict>
</comment>
<sequence length="299" mass="32801">MLPDIQSTKGDGEGESLSWVGMEQIDLPIDIAGRPVSAKVNAGINLLSSPEAEKGIHMSRLYLLLDELTQGEITPALLQHVLKAFLVSHQGRSDEASIEISGDLLLSRKSLNSNHSGWKAYPLTLSAELRQSFTVTLKVGIPYSSTCPASAALSRHVAGLQFSKDFGNRIDRLPAAEIADWLVEKGMPATPHSQRSWAWVDIRLNPEAKSLPVLELIDYAEVALGTAVQTVVKRSDEQAFAVANGQNLMFCEDAARRLNNVFRCASFCEAFDIRVEHQESLHPHNAVARIHWKGSKNVT</sequence>
<feature type="chain" id="PRO_0000147712" description="GTP cyclohydrolase FolE2">
    <location>
        <begin position="1"/>
        <end position="299"/>
    </location>
</feature>
<feature type="site" description="May be catalytically important" evidence="1">
    <location>
        <position position="147"/>
    </location>
</feature>
<dbReference type="EC" id="3.5.4.16" evidence="1"/>
<dbReference type="EMBL" id="AY378100">
    <property type="protein sequence ID" value="AAR07797.1"/>
    <property type="status" value="ALT_INIT"/>
    <property type="molecule type" value="Genomic_DNA"/>
</dbReference>
<dbReference type="SMR" id="Q6U5S4"/>
<dbReference type="UniPathway" id="UPA00848">
    <property type="reaction ID" value="UER00151"/>
</dbReference>
<dbReference type="GO" id="GO:0003934">
    <property type="term" value="F:GTP cyclohydrolase I activity"/>
    <property type="evidence" value="ECO:0007669"/>
    <property type="project" value="UniProtKB-UniRule"/>
</dbReference>
<dbReference type="GO" id="GO:0046654">
    <property type="term" value="P:tetrahydrofolate biosynthetic process"/>
    <property type="evidence" value="ECO:0007669"/>
    <property type="project" value="UniProtKB-UniRule"/>
</dbReference>
<dbReference type="Gene3D" id="3.10.270.10">
    <property type="entry name" value="Urate Oxidase"/>
    <property type="match status" value="1"/>
</dbReference>
<dbReference type="HAMAP" id="MF_01527_B">
    <property type="entry name" value="GTP_cyclohydrol_B"/>
    <property type="match status" value="1"/>
</dbReference>
<dbReference type="InterPro" id="IPR022838">
    <property type="entry name" value="GTP_cyclohydrolase_FolE2"/>
</dbReference>
<dbReference type="InterPro" id="IPR003801">
    <property type="entry name" value="GTP_cyclohydrolase_FolE2/MptA"/>
</dbReference>
<dbReference type="NCBIfam" id="NF010200">
    <property type="entry name" value="PRK13674.1-1"/>
    <property type="match status" value="1"/>
</dbReference>
<dbReference type="PANTHER" id="PTHR36445">
    <property type="entry name" value="GTP CYCLOHYDROLASE MPTA"/>
    <property type="match status" value="1"/>
</dbReference>
<dbReference type="PANTHER" id="PTHR36445:SF1">
    <property type="entry name" value="GTP CYCLOHYDROLASE MPTA"/>
    <property type="match status" value="1"/>
</dbReference>
<dbReference type="Pfam" id="PF02649">
    <property type="entry name" value="GCHY-1"/>
    <property type="match status" value="1"/>
</dbReference>
<protein>
    <recommendedName>
        <fullName evidence="1">GTP cyclohydrolase FolE2</fullName>
        <ecNumber evidence="1">3.5.4.16</ecNumber>
    </recommendedName>
</protein>
<accession>Q6U5S4</accession>
<gene>
    <name evidence="1" type="primary">folE2</name>
    <name type="ORF">LV189</name>
</gene>